<organism>
    <name type="scientific">Treponema denticola (strain ATCC 35405 / DSM 14222 / CIP 103919 / JCM 8153 / KCTC 15104)</name>
    <dbReference type="NCBI Taxonomy" id="243275"/>
    <lineage>
        <taxon>Bacteria</taxon>
        <taxon>Pseudomonadati</taxon>
        <taxon>Spirochaetota</taxon>
        <taxon>Spirochaetia</taxon>
        <taxon>Spirochaetales</taxon>
        <taxon>Treponemataceae</taxon>
        <taxon>Treponema</taxon>
    </lineage>
</organism>
<gene>
    <name type="ordered locus">TDE_2194</name>
</gene>
<comment type="function">
    <text evidence="1">Catalyzes the decarboxylative condensation of pimeloyl-[acyl-carrier protein] and L-alanine to produce 8-amino-7-oxononanoate (AON), [acyl-carrier protein], and carbon dioxide.</text>
</comment>
<comment type="catalytic activity">
    <reaction>
        <text>6-carboxyhexanoyl-[ACP] + L-alanine + H(+) = (8S)-8-amino-7-oxononanoate + holo-[ACP] + CO2</text>
        <dbReference type="Rhea" id="RHEA:42288"/>
        <dbReference type="Rhea" id="RHEA-COMP:9685"/>
        <dbReference type="Rhea" id="RHEA-COMP:9955"/>
        <dbReference type="ChEBI" id="CHEBI:15378"/>
        <dbReference type="ChEBI" id="CHEBI:16526"/>
        <dbReference type="ChEBI" id="CHEBI:57972"/>
        <dbReference type="ChEBI" id="CHEBI:64479"/>
        <dbReference type="ChEBI" id="CHEBI:78846"/>
        <dbReference type="ChEBI" id="CHEBI:149468"/>
        <dbReference type="EC" id="2.3.1.47"/>
    </reaction>
</comment>
<comment type="cofactor">
    <cofactor evidence="1">
        <name>pyridoxal 5'-phosphate</name>
        <dbReference type="ChEBI" id="CHEBI:597326"/>
    </cofactor>
</comment>
<comment type="pathway">
    <text>Cofactor biosynthesis; biotin biosynthesis.</text>
</comment>
<comment type="subunit">
    <text evidence="1">Homodimer.</text>
</comment>
<comment type="similarity">
    <text evidence="2">Belongs to the class-II pyridoxal-phosphate-dependent aminotransferase family. BioF subfamily.</text>
</comment>
<sequence length="395" mass="43001">MSNIHDMEFLQKKVQELKEQGLYKELVTLEGPSDAECVINGKKVINLSSNNYLGFANHPRLKKAAIEAIEKYGAGAGAVRPIIGNMKIHDDLEKLLAEFKREEAVLAFQSGFNCNAGVIQALTDKGDLIISDQLNHASIIDGTRLSKADKAVFQHSDMADLERVLKEKRNNYNNVLIITDGVFSMDGDIAKLPEIVALAEKYNCLTYVDDAHSSGVLGESGRGTVDHFKLHGRVDVAMGTLSKAIGVVGGYVAGKKVTIDWLKNRGRPFLFSTGLPPAAVGAAIEAVKMLMESTEYTDKLWANAKHFKEGLGKLGYNIGHSETPITPIIIGDEAKTLEFSKKLFENGLFSGPIVFPTVPKGTGRVRCMVTAGHTTEQLDRAVKICEKVGKEMGII</sequence>
<feature type="chain" id="PRO_0000381130" description="8-amino-7-oxononanoate synthase">
    <location>
        <begin position="1"/>
        <end position="395"/>
    </location>
</feature>
<feature type="binding site" evidence="1">
    <location>
        <position position="24"/>
    </location>
    <ligand>
        <name>substrate</name>
    </ligand>
</feature>
<feature type="binding site" evidence="1">
    <location>
        <begin position="111"/>
        <end position="112"/>
    </location>
    <ligand>
        <name>pyridoxal 5'-phosphate</name>
        <dbReference type="ChEBI" id="CHEBI:597326"/>
    </ligand>
</feature>
<feature type="binding site" evidence="1">
    <location>
        <position position="136"/>
    </location>
    <ligand>
        <name>substrate</name>
    </ligand>
</feature>
<feature type="binding site" evidence="1">
    <location>
        <position position="184"/>
    </location>
    <ligand>
        <name>pyridoxal 5'-phosphate</name>
        <dbReference type="ChEBI" id="CHEBI:597326"/>
    </ligand>
</feature>
<feature type="binding site" evidence="1">
    <location>
        <begin position="209"/>
        <end position="212"/>
    </location>
    <ligand>
        <name>pyridoxal 5'-phosphate</name>
        <dbReference type="ChEBI" id="CHEBI:597326"/>
    </ligand>
</feature>
<feature type="binding site" evidence="1">
    <location>
        <begin position="240"/>
        <end position="243"/>
    </location>
    <ligand>
        <name>pyridoxal 5'-phosphate</name>
        <dbReference type="ChEBI" id="CHEBI:597326"/>
    </ligand>
</feature>
<feature type="binding site" evidence="1">
    <location>
        <position position="357"/>
    </location>
    <ligand>
        <name>substrate</name>
    </ligand>
</feature>
<feature type="modified residue" description="N6-(pyridoxal phosphate)lysine" evidence="1">
    <location>
        <position position="243"/>
    </location>
</feature>
<reference key="1">
    <citation type="journal article" date="2004" name="Proc. Natl. Acad. Sci. U.S.A.">
        <title>Comparison of the genome of the oral pathogen Treponema denticola with other spirochete genomes.</title>
        <authorList>
            <person name="Seshadri R."/>
            <person name="Myers G.S.A."/>
            <person name="Tettelin H."/>
            <person name="Eisen J.A."/>
            <person name="Heidelberg J.F."/>
            <person name="Dodson R.J."/>
            <person name="Davidsen T.M."/>
            <person name="DeBoy R.T."/>
            <person name="Fouts D.E."/>
            <person name="Haft D.H."/>
            <person name="Selengut J."/>
            <person name="Ren Q."/>
            <person name="Brinkac L.M."/>
            <person name="Madupu R."/>
            <person name="Kolonay J.F."/>
            <person name="Durkin S.A."/>
            <person name="Daugherty S.C."/>
            <person name="Shetty J."/>
            <person name="Shvartsbeyn A."/>
            <person name="Gebregeorgis E."/>
            <person name="Geer K."/>
            <person name="Tsegaye G."/>
            <person name="Malek J.A."/>
            <person name="Ayodeji B."/>
            <person name="Shatsman S."/>
            <person name="McLeod M.P."/>
            <person name="Smajs D."/>
            <person name="Howell J.K."/>
            <person name="Pal S."/>
            <person name="Amin A."/>
            <person name="Vashisth P."/>
            <person name="McNeill T.Z."/>
            <person name="Xiang Q."/>
            <person name="Sodergren E."/>
            <person name="Baca E."/>
            <person name="Weinstock G.M."/>
            <person name="Norris S.J."/>
            <person name="Fraser C.M."/>
            <person name="Paulsen I.T."/>
        </authorList>
    </citation>
    <scope>NUCLEOTIDE SEQUENCE [LARGE SCALE GENOMIC DNA]</scope>
    <source>
        <strain>ATCC 35405 / DSM 14222 / CIP 103919 / JCM 8153 / KCTC 15104</strain>
    </source>
</reference>
<keyword id="KW-0012">Acyltransferase</keyword>
<keyword id="KW-0093">Biotin biosynthesis</keyword>
<keyword id="KW-0663">Pyridoxal phosphate</keyword>
<keyword id="KW-1185">Reference proteome</keyword>
<keyword id="KW-0808">Transferase</keyword>
<accession>Q73KM3</accession>
<name>BIOF_TREDE</name>
<dbReference type="EC" id="2.3.1.47"/>
<dbReference type="EMBL" id="AE017226">
    <property type="protein sequence ID" value="AAS12714.1"/>
    <property type="molecule type" value="Genomic_DNA"/>
</dbReference>
<dbReference type="RefSeq" id="NP_972795.1">
    <property type="nucleotide sequence ID" value="NC_002967.9"/>
</dbReference>
<dbReference type="RefSeq" id="WP_002680038.1">
    <property type="nucleotide sequence ID" value="NC_002967.9"/>
</dbReference>
<dbReference type="SMR" id="Q73KM3"/>
<dbReference type="STRING" id="243275.TDE_2194"/>
<dbReference type="PaxDb" id="243275-TDE_2194"/>
<dbReference type="GeneID" id="2740216"/>
<dbReference type="KEGG" id="tde:TDE_2194"/>
<dbReference type="PATRIC" id="fig|243275.7.peg.2071"/>
<dbReference type="eggNOG" id="COG0156">
    <property type="taxonomic scope" value="Bacteria"/>
</dbReference>
<dbReference type="HOGENOM" id="CLU_015846_11_0_12"/>
<dbReference type="OrthoDB" id="9807157at2"/>
<dbReference type="UniPathway" id="UPA00078"/>
<dbReference type="Proteomes" id="UP000008212">
    <property type="component" value="Chromosome"/>
</dbReference>
<dbReference type="GO" id="GO:0008710">
    <property type="term" value="F:8-amino-7-oxononanoate synthase activity"/>
    <property type="evidence" value="ECO:0000250"/>
    <property type="project" value="UniProtKB"/>
</dbReference>
<dbReference type="GO" id="GO:0008890">
    <property type="term" value="F:glycine C-acetyltransferase activity"/>
    <property type="evidence" value="ECO:0000250"/>
    <property type="project" value="UniProtKB"/>
</dbReference>
<dbReference type="GO" id="GO:0030170">
    <property type="term" value="F:pyridoxal phosphate binding"/>
    <property type="evidence" value="ECO:0000250"/>
    <property type="project" value="UniProtKB"/>
</dbReference>
<dbReference type="GO" id="GO:0009102">
    <property type="term" value="P:biotin biosynthetic process"/>
    <property type="evidence" value="ECO:0000250"/>
    <property type="project" value="UniProtKB"/>
</dbReference>
<dbReference type="CDD" id="cd06454">
    <property type="entry name" value="KBL_like"/>
    <property type="match status" value="1"/>
</dbReference>
<dbReference type="FunFam" id="3.40.640.10:FF:000006">
    <property type="entry name" value="5-aminolevulinate synthase, mitochondrial"/>
    <property type="match status" value="1"/>
</dbReference>
<dbReference type="Gene3D" id="3.90.1150.10">
    <property type="entry name" value="Aspartate Aminotransferase, domain 1"/>
    <property type="match status" value="1"/>
</dbReference>
<dbReference type="Gene3D" id="3.40.640.10">
    <property type="entry name" value="Type I PLP-dependent aspartate aminotransferase-like (Major domain)"/>
    <property type="match status" value="1"/>
</dbReference>
<dbReference type="InterPro" id="IPR001917">
    <property type="entry name" value="Aminotrans_II_pyridoxalP_BS"/>
</dbReference>
<dbReference type="InterPro" id="IPR004839">
    <property type="entry name" value="Aminotransferase_I/II_large"/>
</dbReference>
<dbReference type="InterPro" id="IPR050087">
    <property type="entry name" value="AON_synthase_class-II"/>
</dbReference>
<dbReference type="InterPro" id="IPR010962">
    <property type="entry name" value="AONS_Archaea/Firmicutes"/>
</dbReference>
<dbReference type="InterPro" id="IPR004723">
    <property type="entry name" value="AONS_Archaea/Proteobacteria"/>
</dbReference>
<dbReference type="InterPro" id="IPR015424">
    <property type="entry name" value="PyrdxlP-dep_Trfase"/>
</dbReference>
<dbReference type="InterPro" id="IPR015421">
    <property type="entry name" value="PyrdxlP-dep_Trfase_major"/>
</dbReference>
<dbReference type="InterPro" id="IPR015422">
    <property type="entry name" value="PyrdxlP-dep_Trfase_small"/>
</dbReference>
<dbReference type="NCBIfam" id="TIGR00858">
    <property type="entry name" value="bioF"/>
    <property type="match status" value="1"/>
</dbReference>
<dbReference type="NCBIfam" id="TIGR01825">
    <property type="entry name" value="gly_Cac_T_rel"/>
    <property type="match status" value="1"/>
</dbReference>
<dbReference type="NCBIfam" id="NF005394">
    <property type="entry name" value="PRK06939.1"/>
    <property type="match status" value="1"/>
</dbReference>
<dbReference type="PANTHER" id="PTHR13693">
    <property type="entry name" value="CLASS II AMINOTRANSFERASE/8-AMINO-7-OXONONANOATE SYNTHASE"/>
    <property type="match status" value="1"/>
</dbReference>
<dbReference type="PANTHER" id="PTHR13693:SF3">
    <property type="entry name" value="LD36009P"/>
    <property type="match status" value="1"/>
</dbReference>
<dbReference type="Pfam" id="PF00155">
    <property type="entry name" value="Aminotran_1_2"/>
    <property type="match status" value="1"/>
</dbReference>
<dbReference type="SUPFAM" id="SSF53383">
    <property type="entry name" value="PLP-dependent transferases"/>
    <property type="match status" value="1"/>
</dbReference>
<dbReference type="PROSITE" id="PS00599">
    <property type="entry name" value="AA_TRANSFER_CLASS_2"/>
    <property type="match status" value="1"/>
</dbReference>
<protein>
    <recommendedName>
        <fullName>8-amino-7-oxononanoate synthase</fullName>
        <shortName>AONS</shortName>
        <ecNumber>2.3.1.47</ecNumber>
    </recommendedName>
    <alternativeName>
        <fullName>7-keto-8-amino-pelargonic acid synthase</fullName>
        <shortName>7-KAP synthase</shortName>
        <shortName>KAPA synthase</shortName>
    </alternativeName>
    <alternativeName>
        <fullName>8-amino-7-ketopelargonate synthase</fullName>
    </alternativeName>
    <alternativeName>
        <fullName>Alpha-oxoamine synthase</fullName>
    </alternativeName>
</protein>
<evidence type="ECO:0000250" key="1"/>
<evidence type="ECO:0000305" key="2"/>
<proteinExistence type="inferred from homology"/>